<sequence length="1185" mass="132217">CSTWGGGHFSTFDKYQYDFTGTCNYIFATVCDESSPDFNIQFRRGLDKKIARIIIELGPSVIIVEKDSISVRSVGVIKLPYASNGIQIAPYGRSVRLVAKLMEMELVVMWNNEDYLMVLTEKKYMGKTCGMCGNYDGYELNDFVSEGKLLDTYKFAALQKMDDPSEICLSEEISIPAIPHKKYAVICSQLLNLVSPTCSVPKDGFVTRCQLDMQDCSEPGQKNCTCSTLSEYSRQCAMSHQVVFNWRTENFCSVGKCSANQIYEECGSPCIKTCSNPEYSCSSHCTYGCFCPEGTVLDDISKNRTCVHLEQCPCTLNGETYAPGDTMKAACRTCKCTMGQWNCKELPCPGRCSLEGGSFVTTFDSRSYRFHGVCTYILMKSSSLPHNGTLMAIYEKSGYSHSETSLSAIIYLSTKDKIVISQNELLTDDDELKRLPYKSGDITIFKQSSMFIQMHTEFGLELVVQTSPVFQAYVKVSAQFQGRTLGLCGNYNGDTTDDFMTSMDITEGTASLFVDSWRAGNCLPAMERETDPCALSQLNKISAETHCSILTKKGTVFETCHAVVNPTPFYKRCVYQACNYEETFPYICSALGSYARTCSSMGLILENWRNSMDNCTITCTGNQTFSYNTQACERTCLSLSNPTLECHPTDIPIEGCNCPKGMYLNHKNECVRKSHCPCYLEDRKYILPDQSTMTGGITCYCVNGRLSCTGKLQNPAESCKAPKKYISCSDSLENKYGATCAPTCQMLATGIECIPTKCESGCVCADGLYENLDGRCVPPEECPCEYGGLSYGKGEQIQTECEICTCRKGKWKCVQKSRCSSTCNLYGEGHITTFDGQRFVFDGNCEYILAMDGCNVNRPLSSFKIVTENVICGKSGVTCSRSISIYLGNLTIILRDETYSISGKNLQVKYNVKKNALHLMFDIIIPGKYNMTLIWNKHMNFFIKISRETQETICGLCGNYNGNMKDDFETRSKYVASNELEFVNSWKENPLCGDVYFVVDPCSKNPYRKAWAEKTCSIINSQVFSACHNKVNRMPYYEACVRDSCGCDIGGDCECMCDAIAVYAMACLDKGICIDWRTPEFCPVYCEYYNSHRKTGSGGAYSYGSSVNCTWHYRPCNCPNQYYKYVNIEGCYNCSHDEYFDYEKEKCMPCAMQPTSVTLPTATQPTSPSTSSASTVLTETTNPPV</sequence>
<feature type="chain" id="PRO_0000412756" description="Mucin-6">
    <location>
        <begin position="1" status="less than"/>
        <end position="1185"/>
    </location>
</feature>
<feature type="domain" description="VWFD 1" evidence="2">
    <location>
        <begin position="1" status="less than"/>
        <end position="169"/>
    </location>
</feature>
<feature type="domain" description="TIL 1">
    <location>
        <begin position="257"/>
        <end position="312"/>
    </location>
</feature>
<feature type="domain" description="VWFD 2" evidence="2">
    <location>
        <begin position="350"/>
        <end position="534"/>
    </location>
</feature>
<feature type="domain" description="TIL 2">
    <location>
        <begin position="619"/>
        <end position="676"/>
    </location>
</feature>
<feature type="domain" description="TIL 3">
    <location>
        <begin position="737"/>
        <end position="782"/>
    </location>
</feature>
<feature type="domain" description="VWFD 3" evidence="2">
    <location>
        <begin position="821"/>
        <end position="993"/>
    </location>
</feature>
<feature type="region of interest" description="Disordered" evidence="3">
    <location>
        <begin position="1160"/>
        <end position="1185"/>
    </location>
</feature>
<feature type="compositionally biased region" description="Low complexity" evidence="3">
    <location>
        <begin position="1160"/>
        <end position="1178"/>
    </location>
</feature>
<feature type="glycosylation site" description="N-linked (GlcNAc...) (complex) asparagine" evidence="4">
    <location>
        <position position="223"/>
    </location>
</feature>
<feature type="glycosylation site" description="N-linked (GlcNAc...) (complex) asparagine" evidence="4">
    <location>
        <position position="930"/>
    </location>
</feature>
<feature type="disulfide bond" evidence="2">
    <location>
        <begin position="1"/>
        <end position="132"/>
    </location>
</feature>
<feature type="disulfide bond" evidence="2">
    <location>
        <begin position="23"/>
        <end position="168"/>
    </location>
</feature>
<feature type="disulfide bond" evidence="2">
    <location>
        <begin position="352"/>
        <end position="488"/>
    </location>
</feature>
<feature type="disulfide bond" evidence="2">
    <location>
        <begin position="374"/>
        <end position="533"/>
    </location>
</feature>
<feature type="disulfide bond" evidence="2">
    <location>
        <begin position="823"/>
        <end position="957"/>
    </location>
</feature>
<feature type="disulfide bond" evidence="2">
    <location>
        <begin position="845"/>
        <end position="992"/>
    </location>
</feature>
<feature type="disulfide bond" evidence="2">
    <location>
        <begin position="854"/>
        <end position="954"/>
    </location>
</feature>
<feature type="disulfide bond" evidence="2">
    <location>
        <begin position="872"/>
        <end position="879"/>
    </location>
</feature>
<feature type="sequence conflict" description="In Ref. 2; BAD22545." evidence="6" ref="2">
    <original>DKYQ</original>
    <variation>PTRP</variation>
    <location>
        <begin position="13"/>
        <end position="16"/>
    </location>
</feature>
<feature type="non-terminal residue">
    <location>
        <position position="1"/>
    </location>
</feature>
<gene>
    <name type="primary">MUC6</name>
</gene>
<organism>
    <name type="scientific">Gallus gallus</name>
    <name type="common">Chicken</name>
    <dbReference type="NCBI Taxonomy" id="9031"/>
    <lineage>
        <taxon>Eukaryota</taxon>
        <taxon>Metazoa</taxon>
        <taxon>Chordata</taxon>
        <taxon>Craniata</taxon>
        <taxon>Vertebrata</taxon>
        <taxon>Euteleostomi</taxon>
        <taxon>Archelosauria</taxon>
        <taxon>Archosauria</taxon>
        <taxon>Dinosauria</taxon>
        <taxon>Saurischia</taxon>
        <taxon>Theropoda</taxon>
        <taxon>Coelurosauria</taxon>
        <taxon>Aves</taxon>
        <taxon>Neognathae</taxon>
        <taxon>Galloanserae</taxon>
        <taxon>Galliformes</taxon>
        <taxon>Phasianidae</taxon>
        <taxon>Phasianinae</taxon>
        <taxon>Gallus</taxon>
    </lineage>
</organism>
<protein>
    <recommendedName>
        <fullName>Mucin-6</fullName>
    </recommendedName>
    <alternativeName>
        <fullName>Ovomucin, beta-subunit</fullName>
    </alternativeName>
</protein>
<name>MUC6_CHICK</name>
<keyword id="KW-1015">Disulfide bond</keyword>
<keyword id="KW-0325">Glycoprotein</keyword>
<keyword id="KW-1185">Reference proteome</keyword>
<keyword id="KW-0677">Repeat</keyword>
<keyword id="KW-0964">Secreted</keyword>
<proteinExistence type="evidence at protein level"/>
<evidence type="ECO:0000250" key="1"/>
<evidence type="ECO:0000255" key="2">
    <source>
        <dbReference type="PROSITE-ProRule" id="PRU00580"/>
    </source>
</evidence>
<evidence type="ECO:0000256" key="3">
    <source>
        <dbReference type="SAM" id="MobiDB-lite"/>
    </source>
</evidence>
<evidence type="ECO:0000269" key="4">
    <source>
    </source>
</evidence>
<evidence type="ECO:0000269" key="5">
    <source>
    </source>
</evidence>
<evidence type="ECO:0000305" key="6"/>
<reference key="1">
    <citation type="journal article" date="2004" name="Nature">
        <title>Sequence and comparative analysis of the chicken genome provide unique perspectives on vertebrate evolution.</title>
        <authorList>
            <person name="Hillier L.W."/>
            <person name="Miller W."/>
            <person name="Birney E."/>
            <person name="Warren W."/>
            <person name="Hardison R.C."/>
            <person name="Ponting C.P."/>
            <person name="Bork P."/>
            <person name="Burt D.W."/>
            <person name="Groenen M.A.M."/>
            <person name="Delany M.E."/>
            <person name="Dodgson J.B."/>
            <person name="Chinwalla A.T."/>
            <person name="Cliften P.F."/>
            <person name="Clifton S.W."/>
            <person name="Delehaunty K.D."/>
            <person name="Fronick C."/>
            <person name="Fulton R.S."/>
            <person name="Graves T.A."/>
            <person name="Kremitzki C."/>
            <person name="Layman D."/>
            <person name="Magrini V."/>
            <person name="McPherson J.D."/>
            <person name="Miner T.L."/>
            <person name="Minx P."/>
            <person name="Nash W.E."/>
            <person name="Nhan M.N."/>
            <person name="Nelson J.O."/>
            <person name="Oddy L.G."/>
            <person name="Pohl C.S."/>
            <person name="Randall-Maher J."/>
            <person name="Smith S.M."/>
            <person name="Wallis J.W."/>
            <person name="Yang S.-P."/>
            <person name="Romanov M.N."/>
            <person name="Rondelli C.M."/>
            <person name="Paton B."/>
            <person name="Smith J."/>
            <person name="Morrice D."/>
            <person name="Daniels L."/>
            <person name="Tempest H.G."/>
            <person name="Robertson L."/>
            <person name="Masabanda J.S."/>
            <person name="Griffin D.K."/>
            <person name="Vignal A."/>
            <person name="Fillon V."/>
            <person name="Jacobbson L."/>
            <person name="Kerje S."/>
            <person name="Andersson L."/>
            <person name="Crooijmans R.P."/>
            <person name="Aerts J."/>
            <person name="van der Poel J.J."/>
            <person name="Ellegren H."/>
            <person name="Caldwell R.B."/>
            <person name="Hubbard S.J."/>
            <person name="Grafham D.V."/>
            <person name="Kierzek A.M."/>
            <person name="McLaren S.R."/>
            <person name="Overton I.M."/>
            <person name="Arakawa H."/>
            <person name="Beattie K.J."/>
            <person name="Bezzubov Y."/>
            <person name="Boardman P.E."/>
            <person name="Bonfield J.K."/>
            <person name="Croning M.D.R."/>
            <person name="Davies R.M."/>
            <person name="Francis M.D."/>
            <person name="Humphray S.J."/>
            <person name="Scott C.E."/>
            <person name="Taylor R.G."/>
            <person name="Tickle C."/>
            <person name="Brown W.R.A."/>
            <person name="Rogers J."/>
            <person name="Buerstedde J.-M."/>
            <person name="Wilson S.A."/>
            <person name="Stubbs L."/>
            <person name="Ovcharenko I."/>
            <person name="Gordon L."/>
            <person name="Lucas S."/>
            <person name="Miller M.M."/>
            <person name="Inoko H."/>
            <person name="Shiina T."/>
            <person name="Kaufman J."/>
            <person name="Salomonsen J."/>
            <person name="Skjoedt K."/>
            <person name="Wong G.K.-S."/>
            <person name="Wang J."/>
            <person name="Liu B."/>
            <person name="Wang J."/>
            <person name="Yu J."/>
            <person name="Yang H."/>
            <person name="Nefedov M."/>
            <person name="Koriabine M."/>
            <person name="Dejong P.J."/>
            <person name="Goodstadt L."/>
            <person name="Webber C."/>
            <person name="Dickens N.J."/>
            <person name="Letunic I."/>
            <person name="Suyama M."/>
            <person name="Torrents D."/>
            <person name="von Mering C."/>
            <person name="Zdobnov E.M."/>
            <person name="Makova K."/>
            <person name="Nekrutenko A."/>
            <person name="Elnitski L."/>
            <person name="Eswara P."/>
            <person name="King D.C."/>
            <person name="Yang S.-P."/>
            <person name="Tyekucheva S."/>
            <person name="Radakrishnan A."/>
            <person name="Harris R.S."/>
            <person name="Chiaromonte F."/>
            <person name="Taylor J."/>
            <person name="He J."/>
            <person name="Rijnkels M."/>
            <person name="Griffiths-Jones S."/>
            <person name="Ureta-Vidal A."/>
            <person name="Hoffman M.M."/>
            <person name="Severin J."/>
            <person name="Searle S.M.J."/>
            <person name="Law A.S."/>
            <person name="Speed D."/>
            <person name="Waddington D."/>
            <person name="Cheng Z."/>
            <person name="Tuzun E."/>
            <person name="Eichler E."/>
            <person name="Bao Z."/>
            <person name="Flicek P."/>
            <person name="Shteynberg D.D."/>
            <person name="Brent M.R."/>
            <person name="Bye J.M."/>
            <person name="Huckle E.J."/>
            <person name="Chatterji S."/>
            <person name="Dewey C."/>
            <person name="Pachter L."/>
            <person name="Kouranov A."/>
            <person name="Mourelatos Z."/>
            <person name="Hatzigeorgiou A.G."/>
            <person name="Paterson A.H."/>
            <person name="Ivarie R."/>
            <person name="Brandstrom M."/>
            <person name="Axelsson E."/>
            <person name="Backstrom N."/>
            <person name="Berlin S."/>
            <person name="Webster M.T."/>
            <person name="Pourquie O."/>
            <person name="Reymond A."/>
            <person name="Ucla C."/>
            <person name="Antonarakis S.E."/>
            <person name="Long M."/>
            <person name="Emerson J.J."/>
            <person name="Betran E."/>
            <person name="Dupanloup I."/>
            <person name="Kaessmann H."/>
            <person name="Hinrichs A.S."/>
            <person name="Bejerano G."/>
            <person name="Furey T.S."/>
            <person name="Harte R.A."/>
            <person name="Raney B."/>
            <person name="Siepel A."/>
            <person name="Kent W.J."/>
            <person name="Haussler D."/>
            <person name="Eyras E."/>
            <person name="Castelo R."/>
            <person name="Abril J.F."/>
            <person name="Castellano S."/>
            <person name="Camara F."/>
            <person name="Parra G."/>
            <person name="Guigo R."/>
            <person name="Bourque G."/>
            <person name="Tesler G."/>
            <person name="Pevzner P.A."/>
            <person name="Smit A."/>
            <person name="Fulton L.A."/>
            <person name="Mardis E.R."/>
            <person name="Wilson R.K."/>
        </authorList>
    </citation>
    <scope>NUCLEOTIDE SEQUENCE [LARGE SCALE GENOMIC DNA]</scope>
    <source>
        <strain>Red jungle fowl</strain>
    </source>
</reference>
<reference key="2">
    <citation type="submission" date="2004-06" db="EMBL/GenBank/DDBJ databases">
        <title>Partial amino acid Sequence of beta-subunit in hen egg white ovomucin deduced from cloned cDNA.</title>
        <authorList>
            <person name="Watanabe K."/>
            <person name="Shimoyamada M."/>
            <person name="Onizuka T."/>
            <person name="Akiyama H."/>
        </authorList>
    </citation>
    <scope>NUCLEOTIDE SEQUENCE [MRNA] OF 13-839</scope>
    <source>
        <tissue>Oviduct</tissue>
    </source>
</reference>
<reference key="3">
    <citation type="journal article" date="1971" name="Biochem. J.">
        <title>Studies on the composition of egg-white ovomucin.</title>
        <authorList>
            <person name="Robinson D.S."/>
            <person name="Monsey J.B."/>
        </authorList>
    </citation>
    <scope>STRUCTURE OF CARBOHYDRATES</scope>
    <scope>FUNCTION</scope>
    <scope>SUBUNIT</scope>
</reference>
<reference key="4">
    <citation type="journal article" date="2011" name="Glycoconj. J.">
        <title>N-glycosylation of ovomucin from hen egg white.</title>
        <authorList>
            <person name="Offengenden M."/>
            <person name="Fentabil M.A."/>
            <person name="Wu J."/>
        </authorList>
    </citation>
    <scope>GLYCOSYLATION AT ASN-223 AND ASN-930</scope>
    <scope>IDENTIFICATION BY MASS SPECTROMETRY</scope>
</reference>
<dbReference type="EMBL" id="AADN02030346">
    <property type="status" value="NOT_ANNOTATED_CDS"/>
    <property type="molecule type" value="Genomic_DNA"/>
</dbReference>
<dbReference type="EMBL" id="AB180913">
    <property type="protein sequence ID" value="BAD22545.1"/>
    <property type="molecule type" value="mRNA"/>
</dbReference>
<dbReference type="SMR" id="F1NBL0"/>
<dbReference type="STRING" id="9031.ENSGALP00000050462"/>
<dbReference type="Allergome" id="2741">
    <property type="allergen name" value="Gal d Ovomucin"/>
</dbReference>
<dbReference type="GlyCosmos" id="F1NBL0">
    <property type="glycosylation" value="2 sites, No reported glycans"/>
</dbReference>
<dbReference type="GlyGen" id="F1NBL0">
    <property type="glycosylation" value="2 sites"/>
</dbReference>
<dbReference type="iPTMnet" id="F1NBL0"/>
<dbReference type="PaxDb" id="9031-ENSGALP00000032057"/>
<dbReference type="VEuPathDB" id="HostDB:geneid_414878"/>
<dbReference type="VEuPathDB" id="HostDB:LOC121113279"/>
<dbReference type="eggNOG" id="KOG1216">
    <property type="taxonomic scope" value="Eukaryota"/>
</dbReference>
<dbReference type="InParanoid" id="F1NBL0"/>
<dbReference type="PhylomeDB" id="F1NBL0"/>
<dbReference type="TreeFam" id="TF300299"/>
<dbReference type="Proteomes" id="UP000000539">
    <property type="component" value="Unassembled WGS sequence"/>
</dbReference>
<dbReference type="GO" id="GO:0031012">
    <property type="term" value="C:extracellular matrix"/>
    <property type="evidence" value="ECO:0000318"/>
    <property type="project" value="GO_Central"/>
</dbReference>
<dbReference type="GO" id="GO:0005615">
    <property type="term" value="C:extracellular space"/>
    <property type="evidence" value="ECO:0000314"/>
    <property type="project" value="AgBase"/>
</dbReference>
<dbReference type="GO" id="GO:0043231">
    <property type="term" value="C:intracellular membrane-bounded organelle"/>
    <property type="evidence" value="ECO:0000314"/>
    <property type="project" value="AgBase"/>
</dbReference>
<dbReference type="GO" id="GO:0099512">
    <property type="term" value="C:supramolecular fiber"/>
    <property type="evidence" value="ECO:0000314"/>
    <property type="project" value="AgBase"/>
</dbReference>
<dbReference type="GO" id="GO:0003823">
    <property type="term" value="F:antigen binding"/>
    <property type="evidence" value="ECO:0000314"/>
    <property type="project" value="AgBase"/>
</dbReference>
<dbReference type="GO" id="GO:0046790">
    <property type="term" value="F:virion binding"/>
    <property type="evidence" value="ECO:0000314"/>
    <property type="project" value="AgBase"/>
</dbReference>
<dbReference type="GO" id="GO:0042632">
    <property type="term" value="P:cholesterol homeostasis"/>
    <property type="evidence" value="ECO:0000315"/>
    <property type="project" value="AgBase"/>
</dbReference>
<dbReference type="GO" id="GO:0030299">
    <property type="term" value="P:intestinal cholesterol absorption"/>
    <property type="evidence" value="ECO:0000315"/>
    <property type="project" value="AgBase"/>
</dbReference>
<dbReference type="GO" id="GO:0002281">
    <property type="term" value="P:macrophage activation involved in immune response"/>
    <property type="evidence" value="ECO:0000315"/>
    <property type="project" value="AgBase"/>
</dbReference>
<dbReference type="GO" id="GO:0030308">
    <property type="term" value="P:negative regulation of cell growth"/>
    <property type="evidence" value="ECO:0000315"/>
    <property type="project" value="AgBase"/>
</dbReference>
<dbReference type="CDD" id="cd19941">
    <property type="entry name" value="TIL"/>
    <property type="match status" value="3"/>
</dbReference>
<dbReference type="FunFam" id="2.10.25.10:FF:000153">
    <property type="entry name" value="MUC5B isoform 1"/>
    <property type="match status" value="2"/>
</dbReference>
<dbReference type="FunFam" id="2.10.25.10:FF:000414">
    <property type="entry name" value="von Willebrand factor"/>
    <property type="match status" value="1"/>
</dbReference>
<dbReference type="Gene3D" id="2.10.25.10">
    <property type="entry name" value="Laminin"/>
    <property type="match status" value="3"/>
</dbReference>
<dbReference type="InterPro" id="IPR050780">
    <property type="entry name" value="Mucin_vWF_Thrombospondin_sf"/>
</dbReference>
<dbReference type="InterPro" id="IPR036084">
    <property type="entry name" value="Ser_inhib-like_sf"/>
</dbReference>
<dbReference type="InterPro" id="IPR002919">
    <property type="entry name" value="TIL_dom"/>
</dbReference>
<dbReference type="InterPro" id="IPR014853">
    <property type="entry name" value="VWF/SSPO/ZAN-like_Cys-rich_dom"/>
</dbReference>
<dbReference type="InterPro" id="IPR001007">
    <property type="entry name" value="VWF_dom"/>
</dbReference>
<dbReference type="InterPro" id="IPR001846">
    <property type="entry name" value="VWF_type-D"/>
</dbReference>
<dbReference type="PANTHER" id="PTHR11339">
    <property type="entry name" value="EXTRACELLULAR MATRIX GLYCOPROTEIN RELATED"/>
    <property type="match status" value="1"/>
</dbReference>
<dbReference type="PANTHER" id="PTHR11339:SF264">
    <property type="entry name" value="MUCIN-6"/>
    <property type="match status" value="1"/>
</dbReference>
<dbReference type="Pfam" id="PF08742">
    <property type="entry name" value="C8"/>
    <property type="match status" value="3"/>
</dbReference>
<dbReference type="Pfam" id="PF01826">
    <property type="entry name" value="TIL"/>
    <property type="match status" value="3"/>
</dbReference>
<dbReference type="Pfam" id="PF00094">
    <property type="entry name" value="VWD"/>
    <property type="match status" value="3"/>
</dbReference>
<dbReference type="SMART" id="SM00832">
    <property type="entry name" value="C8"/>
    <property type="match status" value="3"/>
</dbReference>
<dbReference type="SMART" id="SM00215">
    <property type="entry name" value="VWC_out"/>
    <property type="match status" value="1"/>
</dbReference>
<dbReference type="SMART" id="SM00216">
    <property type="entry name" value="VWD"/>
    <property type="match status" value="3"/>
</dbReference>
<dbReference type="SUPFAM" id="SSF57567">
    <property type="entry name" value="Serine protease inhibitors"/>
    <property type="match status" value="3"/>
</dbReference>
<dbReference type="PROSITE" id="PS51233">
    <property type="entry name" value="VWFD"/>
    <property type="match status" value="3"/>
</dbReference>
<comment type="function">
    <text evidence="5">Ovomucin, the glycoprotein responsible for the gel properties of egg white, is composed for 2 subunits, alpha-ovomucin/MUC5B and beta-ovomucin/MUC6.</text>
</comment>
<comment type="subunit">
    <text evidence="5">Multimer; disulfide-linked.</text>
</comment>
<comment type="subcellular location">
    <subcellularLocation>
        <location evidence="1">Secreted</location>
    </subcellularLocation>
</comment>
<comment type="PTM">
    <text evidence="4">N-glycosylated with N-acetylglucosamine (6.7%), N-acetylgalactosamine (0.6%), galactose (1.8%), mannose (4.6%), N-acetylneuraminic acid (1.0%) and sulfate-containing glycans (0.7%).</text>
</comment>
<accession>F1NBL0</accession>
<accession>Q6L608</accession>